<name>MRAZ_RHIR8</name>
<organism>
    <name type="scientific">Rhizobium rhizogenes (strain K84 / ATCC BAA-868)</name>
    <name type="common">Agrobacterium radiobacter</name>
    <dbReference type="NCBI Taxonomy" id="311403"/>
    <lineage>
        <taxon>Bacteria</taxon>
        <taxon>Pseudomonadati</taxon>
        <taxon>Pseudomonadota</taxon>
        <taxon>Alphaproteobacteria</taxon>
        <taxon>Hyphomicrobiales</taxon>
        <taxon>Rhizobiaceae</taxon>
        <taxon>Rhizobium/Agrobacterium group</taxon>
        <taxon>Rhizobium</taxon>
    </lineage>
</organism>
<protein>
    <recommendedName>
        <fullName>Transcriptional regulator MraZ</fullName>
    </recommendedName>
</protein>
<proteinExistence type="inferred from homology"/>
<dbReference type="EMBL" id="CP000628">
    <property type="protein sequence ID" value="ACM27056.1"/>
    <property type="molecule type" value="Genomic_DNA"/>
</dbReference>
<dbReference type="RefSeq" id="WP_012651824.1">
    <property type="nucleotide sequence ID" value="NC_011985.1"/>
</dbReference>
<dbReference type="SMR" id="B9JH60"/>
<dbReference type="STRING" id="311403.Arad_3005"/>
<dbReference type="GeneID" id="86848928"/>
<dbReference type="KEGG" id="ara:Arad_3005"/>
<dbReference type="eggNOG" id="COG2001">
    <property type="taxonomic scope" value="Bacteria"/>
</dbReference>
<dbReference type="HOGENOM" id="CLU_107907_1_0_5"/>
<dbReference type="Proteomes" id="UP000001600">
    <property type="component" value="Chromosome 1"/>
</dbReference>
<dbReference type="GO" id="GO:0005737">
    <property type="term" value="C:cytoplasm"/>
    <property type="evidence" value="ECO:0007669"/>
    <property type="project" value="UniProtKB-UniRule"/>
</dbReference>
<dbReference type="GO" id="GO:0009295">
    <property type="term" value="C:nucleoid"/>
    <property type="evidence" value="ECO:0007669"/>
    <property type="project" value="UniProtKB-SubCell"/>
</dbReference>
<dbReference type="GO" id="GO:0003700">
    <property type="term" value="F:DNA-binding transcription factor activity"/>
    <property type="evidence" value="ECO:0007669"/>
    <property type="project" value="UniProtKB-UniRule"/>
</dbReference>
<dbReference type="GO" id="GO:0000976">
    <property type="term" value="F:transcription cis-regulatory region binding"/>
    <property type="evidence" value="ECO:0007669"/>
    <property type="project" value="TreeGrafter"/>
</dbReference>
<dbReference type="GO" id="GO:2000143">
    <property type="term" value="P:negative regulation of DNA-templated transcription initiation"/>
    <property type="evidence" value="ECO:0007669"/>
    <property type="project" value="TreeGrafter"/>
</dbReference>
<dbReference type="CDD" id="cd16321">
    <property type="entry name" value="MraZ_C"/>
    <property type="match status" value="1"/>
</dbReference>
<dbReference type="CDD" id="cd16320">
    <property type="entry name" value="MraZ_N"/>
    <property type="match status" value="1"/>
</dbReference>
<dbReference type="Gene3D" id="3.40.1550.20">
    <property type="entry name" value="Transcriptional regulator MraZ domain"/>
    <property type="match status" value="1"/>
</dbReference>
<dbReference type="HAMAP" id="MF_01008">
    <property type="entry name" value="MraZ"/>
    <property type="match status" value="1"/>
</dbReference>
<dbReference type="InterPro" id="IPR003444">
    <property type="entry name" value="MraZ"/>
</dbReference>
<dbReference type="InterPro" id="IPR035644">
    <property type="entry name" value="MraZ_C"/>
</dbReference>
<dbReference type="InterPro" id="IPR020603">
    <property type="entry name" value="MraZ_dom"/>
</dbReference>
<dbReference type="InterPro" id="IPR035642">
    <property type="entry name" value="MraZ_N"/>
</dbReference>
<dbReference type="InterPro" id="IPR038619">
    <property type="entry name" value="MraZ_sf"/>
</dbReference>
<dbReference type="InterPro" id="IPR007159">
    <property type="entry name" value="SpoVT-AbrB_dom"/>
</dbReference>
<dbReference type="InterPro" id="IPR037914">
    <property type="entry name" value="SpoVT-AbrB_sf"/>
</dbReference>
<dbReference type="NCBIfam" id="NF001477">
    <property type="entry name" value="PRK00326.2-4"/>
    <property type="match status" value="1"/>
</dbReference>
<dbReference type="PANTHER" id="PTHR34701">
    <property type="entry name" value="TRANSCRIPTIONAL REGULATOR MRAZ"/>
    <property type="match status" value="1"/>
</dbReference>
<dbReference type="PANTHER" id="PTHR34701:SF1">
    <property type="entry name" value="TRANSCRIPTIONAL REGULATOR MRAZ"/>
    <property type="match status" value="1"/>
</dbReference>
<dbReference type="Pfam" id="PF02381">
    <property type="entry name" value="MraZ"/>
    <property type="match status" value="1"/>
</dbReference>
<dbReference type="SUPFAM" id="SSF89447">
    <property type="entry name" value="AbrB/MazE/MraZ-like"/>
    <property type="match status" value="1"/>
</dbReference>
<dbReference type="PROSITE" id="PS51740">
    <property type="entry name" value="SPOVT_ABRB"/>
    <property type="match status" value="2"/>
</dbReference>
<reference key="1">
    <citation type="journal article" date="2009" name="J. Bacteriol.">
        <title>Genome sequences of three Agrobacterium biovars help elucidate the evolution of multichromosome genomes in bacteria.</title>
        <authorList>
            <person name="Slater S.C."/>
            <person name="Goldman B.S."/>
            <person name="Goodner B."/>
            <person name="Setubal J.C."/>
            <person name="Farrand S.K."/>
            <person name="Nester E.W."/>
            <person name="Burr T.J."/>
            <person name="Banta L."/>
            <person name="Dickerman A.W."/>
            <person name="Paulsen I."/>
            <person name="Otten L."/>
            <person name="Suen G."/>
            <person name="Welch R."/>
            <person name="Almeida N.F."/>
            <person name="Arnold F."/>
            <person name="Burton O.T."/>
            <person name="Du Z."/>
            <person name="Ewing A."/>
            <person name="Godsy E."/>
            <person name="Heisel S."/>
            <person name="Houmiel K.L."/>
            <person name="Jhaveri J."/>
            <person name="Lu J."/>
            <person name="Miller N.M."/>
            <person name="Norton S."/>
            <person name="Chen Q."/>
            <person name="Phoolcharoen W."/>
            <person name="Ohlin V."/>
            <person name="Ondrusek D."/>
            <person name="Pride N."/>
            <person name="Stricklin S.L."/>
            <person name="Sun J."/>
            <person name="Wheeler C."/>
            <person name="Wilson L."/>
            <person name="Zhu H."/>
            <person name="Wood D.W."/>
        </authorList>
    </citation>
    <scope>NUCLEOTIDE SEQUENCE [LARGE SCALE GENOMIC DNA]</scope>
    <source>
        <strain>K84 / ATCC BAA-868</strain>
    </source>
</reference>
<sequence length="146" mass="16466">MNRFLSNATNRIDAKGRVSVPAAFRSVLTERNIQELYCFQDFVFPAISVGGLDLLDRFERQIAADDPFSPAANQMSLLIHGGGVFVRLDAEGRLMVTDFIRDFTGITNEVTFVGRADHFQLWQPEAFQALQAQAREERKLAGRRSE</sequence>
<feature type="chain" id="PRO_1000148844" description="Transcriptional regulator MraZ">
    <location>
        <begin position="1"/>
        <end position="146"/>
    </location>
</feature>
<feature type="domain" description="SpoVT-AbrB 1" evidence="2">
    <location>
        <begin position="7"/>
        <end position="54"/>
    </location>
</feature>
<feature type="domain" description="SpoVT-AbrB 2" evidence="2">
    <location>
        <begin position="83"/>
        <end position="126"/>
    </location>
</feature>
<comment type="subunit">
    <text evidence="1">Forms oligomers.</text>
</comment>
<comment type="subcellular location">
    <subcellularLocation>
        <location evidence="1">Cytoplasm</location>
        <location evidence="1">Nucleoid</location>
    </subcellularLocation>
</comment>
<comment type="similarity">
    <text evidence="1">Belongs to the MraZ family.</text>
</comment>
<gene>
    <name evidence="1" type="primary">mraZ</name>
    <name type="ordered locus">Arad_3005</name>
</gene>
<keyword id="KW-0963">Cytoplasm</keyword>
<keyword id="KW-0238">DNA-binding</keyword>
<keyword id="KW-0677">Repeat</keyword>
<keyword id="KW-0804">Transcription</keyword>
<keyword id="KW-0805">Transcription regulation</keyword>
<evidence type="ECO:0000255" key="1">
    <source>
        <dbReference type="HAMAP-Rule" id="MF_01008"/>
    </source>
</evidence>
<evidence type="ECO:0000255" key="2">
    <source>
        <dbReference type="PROSITE-ProRule" id="PRU01076"/>
    </source>
</evidence>
<accession>B9JH60</accession>